<gene>
    <name evidence="2 28" type="primary">dnaA</name>
    <name type="synonym">dnaH</name>
    <name type="ordered locus">BSU00010</name>
</gene>
<dbReference type="EC" id="3.6.4.-" evidence="18 19"/>
<dbReference type="EMBL" id="X02369">
    <property type="protein sequence ID" value="CAA26217.1"/>
    <property type="molecule type" value="Genomic_DNA"/>
</dbReference>
<dbReference type="EMBL" id="D26185">
    <property type="protein sequence ID" value="BAA05237.1"/>
    <property type="molecule type" value="Genomic_DNA"/>
</dbReference>
<dbReference type="EMBL" id="AL009126">
    <property type="protein sequence ID" value="CAB11777.1"/>
    <property type="molecule type" value="Genomic_DNA"/>
</dbReference>
<dbReference type="EMBL" id="X12778">
    <property type="protein sequence ID" value="CAA31269.1"/>
    <property type="molecule type" value="Genomic_DNA"/>
</dbReference>
<dbReference type="EMBL" id="X12779">
    <property type="protein sequence ID" value="CAA31270.1"/>
    <property type="molecule type" value="Genomic_DNA"/>
</dbReference>
<dbReference type="PIR" id="A22930">
    <property type="entry name" value="IQBSOC"/>
</dbReference>
<dbReference type="RefSeq" id="NP_387882.1">
    <property type="nucleotide sequence ID" value="NC_000964.3"/>
</dbReference>
<dbReference type="RefSeq" id="WP_003242674.1">
    <property type="nucleotide sequence ID" value="NZ_OZ025638.1"/>
</dbReference>
<dbReference type="PDB" id="4TPS">
    <property type="method" value="X-ray"/>
    <property type="resolution" value="1.65 A"/>
    <property type="chains" value="B/D=1-82"/>
</dbReference>
<dbReference type="PDB" id="8BTG">
    <property type="method" value="EM"/>
    <property type="resolution" value="3.20 A"/>
    <property type="chains" value="A/B/C/D/E/F/G=109-446"/>
</dbReference>
<dbReference type="PDB" id="8BV3">
    <property type="method" value="X-ray"/>
    <property type="resolution" value="2.38 A"/>
    <property type="chains" value="A/B/C/D/E=100-344"/>
</dbReference>
<dbReference type="PDBsum" id="4TPS"/>
<dbReference type="PDBsum" id="8BTG"/>
<dbReference type="PDBsum" id="8BV3"/>
<dbReference type="SMR" id="P05648"/>
<dbReference type="DIP" id="DIP-41940N"/>
<dbReference type="FunCoup" id="P05648">
    <property type="interactions" value="582"/>
</dbReference>
<dbReference type="IntAct" id="P05648">
    <property type="interactions" value="7"/>
</dbReference>
<dbReference type="STRING" id="224308.BSU00010"/>
<dbReference type="PaxDb" id="224308-BSU00010"/>
<dbReference type="EnsemblBacteria" id="CAB11777">
    <property type="protein sequence ID" value="CAB11777"/>
    <property type="gene ID" value="BSU_00010"/>
</dbReference>
<dbReference type="GeneID" id="86871250"/>
<dbReference type="GeneID" id="939978"/>
<dbReference type="KEGG" id="bsu:BSU00010"/>
<dbReference type="PATRIC" id="fig|224308.179.peg.1"/>
<dbReference type="eggNOG" id="COG0593">
    <property type="taxonomic scope" value="Bacteria"/>
</dbReference>
<dbReference type="InParanoid" id="P05648"/>
<dbReference type="OrthoDB" id="9807019at2"/>
<dbReference type="PhylomeDB" id="P05648"/>
<dbReference type="BioCyc" id="BSUB:BSU00010-MONOMER"/>
<dbReference type="EvolutionaryTrace" id="P05648"/>
<dbReference type="PRO" id="PR:P05648"/>
<dbReference type="Proteomes" id="UP000001570">
    <property type="component" value="Chromosome"/>
</dbReference>
<dbReference type="GO" id="GO:0005737">
    <property type="term" value="C:cytoplasm"/>
    <property type="evidence" value="ECO:0007669"/>
    <property type="project" value="UniProtKB-SubCell"/>
</dbReference>
<dbReference type="GO" id="GO:1990101">
    <property type="term" value="C:DnaA-oriC complex"/>
    <property type="evidence" value="ECO:0000314"/>
    <property type="project" value="UniProtKB"/>
</dbReference>
<dbReference type="GO" id="GO:0009295">
    <property type="term" value="C:nucleoid"/>
    <property type="evidence" value="ECO:0007669"/>
    <property type="project" value="UniProtKB-SubCell"/>
</dbReference>
<dbReference type="GO" id="GO:0005886">
    <property type="term" value="C:plasma membrane"/>
    <property type="evidence" value="ECO:0000318"/>
    <property type="project" value="GO_Central"/>
</dbReference>
<dbReference type="GO" id="GO:0005524">
    <property type="term" value="F:ATP binding"/>
    <property type="evidence" value="ECO:0007669"/>
    <property type="project" value="UniProtKB-UniRule"/>
</dbReference>
<dbReference type="GO" id="GO:0016887">
    <property type="term" value="F:ATP hydrolysis activity"/>
    <property type="evidence" value="ECO:0007669"/>
    <property type="project" value="InterPro"/>
</dbReference>
<dbReference type="GO" id="GO:0003688">
    <property type="term" value="F:DNA replication origin binding"/>
    <property type="evidence" value="ECO:0000318"/>
    <property type="project" value="GO_Central"/>
</dbReference>
<dbReference type="GO" id="GO:0042802">
    <property type="term" value="F:identical protein binding"/>
    <property type="evidence" value="ECO:0000353"/>
    <property type="project" value="IntAct"/>
</dbReference>
<dbReference type="GO" id="GO:0008289">
    <property type="term" value="F:lipid binding"/>
    <property type="evidence" value="ECO:0007669"/>
    <property type="project" value="UniProtKB-KW"/>
</dbReference>
<dbReference type="GO" id="GO:0006260">
    <property type="term" value="P:DNA replication"/>
    <property type="evidence" value="ECO:0000318"/>
    <property type="project" value="GO_Central"/>
</dbReference>
<dbReference type="GO" id="GO:0006270">
    <property type="term" value="P:DNA replication initiation"/>
    <property type="evidence" value="ECO:0000314"/>
    <property type="project" value="CACAO"/>
</dbReference>
<dbReference type="GO" id="GO:0006275">
    <property type="term" value="P:regulation of DNA replication"/>
    <property type="evidence" value="ECO:0007669"/>
    <property type="project" value="UniProtKB-UniRule"/>
</dbReference>
<dbReference type="CDD" id="cd00009">
    <property type="entry name" value="AAA"/>
    <property type="match status" value="1"/>
</dbReference>
<dbReference type="CDD" id="cd06571">
    <property type="entry name" value="Bac_DnaA_C"/>
    <property type="match status" value="1"/>
</dbReference>
<dbReference type="FunFam" id="1.10.1750.10:FF:000003">
    <property type="entry name" value="Chromosomal replication initiator protein DnaA"/>
    <property type="match status" value="1"/>
</dbReference>
<dbReference type="FunFam" id="1.10.8.60:FF:000003">
    <property type="entry name" value="Chromosomal replication initiator protein DnaA"/>
    <property type="match status" value="1"/>
</dbReference>
<dbReference type="FunFam" id="3.30.300.180:FF:000002">
    <property type="entry name" value="Chromosomal replication initiator protein DnaA"/>
    <property type="match status" value="1"/>
</dbReference>
<dbReference type="FunFam" id="3.40.50.300:FF:000150">
    <property type="entry name" value="Chromosomal replication initiator protein DnaA"/>
    <property type="match status" value="1"/>
</dbReference>
<dbReference type="Gene3D" id="1.10.1750.10">
    <property type="match status" value="1"/>
</dbReference>
<dbReference type="Gene3D" id="1.10.8.60">
    <property type="match status" value="1"/>
</dbReference>
<dbReference type="Gene3D" id="3.30.300.180">
    <property type="match status" value="1"/>
</dbReference>
<dbReference type="Gene3D" id="3.40.50.300">
    <property type="entry name" value="P-loop containing nucleotide triphosphate hydrolases"/>
    <property type="match status" value="1"/>
</dbReference>
<dbReference type="HAMAP" id="MF_00377">
    <property type="entry name" value="DnaA_bact"/>
    <property type="match status" value="1"/>
</dbReference>
<dbReference type="InterPro" id="IPR003593">
    <property type="entry name" value="AAA+_ATPase"/>
</dbReference>
<dbReference type="InterPro" id="IPR001957">
    <property type="entry name" value="Chromosome_initiator_DnaA"/>
</dbReference>
<dbReference type="InterPro" id="IPR020591">
    <property type="entry name" value="Chromosome_initiator_DnaA-like"/>
</dbReference>
<dbReference type="InterPro" id="IPR018312">
    <property type="entry name" value="Chromosome_initiator_DnaA_CS"/>
</dbReference>
<dbReference type="InterPro" id="IPR013159">
    <property type="entry name" value="DnaA_C"/>
</dbReference>
<dbReference type="InterPro" id="IPR013317">
    <property type="entry name" value="DnaA_dom"/>
</dbReference>
<dbReference type="InterPro" id="IPR024633">
    <property type="entry name" value="DnaA_N_dom"/>
</dbReference>
<dbReference type="InterPro" id="IPR038454">
    <property type="entry name" value="DnaA_N_sf"/>
</dbReference>
<dbReference type="InterPro" id="IPR027417">
    <property type="entry name" value="P-loop_NTPase"/>
</dbReference>
<dbReference type="InterPro" id="IPR010921">
    <property type="entry name" value="Trp_repressor/repl_initiator"/>
</dbReference>
<dbReference type="NCBIfam" id="TIGR00362">
    <property type="entry name" value="DnaA"/>
    <property type="match status" value="1"/>
</dbReference>
<dbReference type="NCBIfam" id="NF010686">
    <property type="entry name" value="PRK14086.1"/>
    <property type="match status" value="1"/>
</dbReference>
<dbReference type="PANTHER" id="PTHR30050">
    <property type="entry name" value="CHROMOSOMAL REPLICATION INITIATOR PROTEIN DNAA"/>
    <property type="match status" value="1"/>
</dbReference>
<dbReference type="PANTHER" id="PTHR30050:SF2">
    <property type="entry name" value="CHROMOSOMAL REPLICATION INITIATOR PROTEIN DNAA"/>
    <property type="match status" value="1"/>
</dbReference>
<dbReference type="Pfam" id="PF00308">
    <property type="entry name" value="Bac_DnaA"/>
    <property type="match status" value="1"/>
</dbReference>
<dbReference type="Pfam" id="PF08299">
    <property type="entry name" value="Bac_DnaA_C"/>
    <property type="match status" value="1"/>
</dbReference>
<dbReference type="Pfam" id="PF11638">
    <property type="entry name" value="DnaA_N"/>
    <property type="match status" value="1"/>
</dbReference>
<dbReference type="PRINTS" id="PR00051">
    <property type="entry name" value="DNAA"/>
</dbReference>
<dbReference type="SMART" id="SM00382">
    <property type="entry name" value="AAA"/>
    <property type="match status" value="1"/>
</dbReference>
<dbReference type="SMART" id="SM00760">
    <property type="entry name" value="Bac_DnaA_C"/>
    <property type="match status" value="1"/>
</dbReference>
<dbReference type="SUPFAM" id="SSF52540">
    <property type="entry name" value="P-loop containing nucleoside triphosphate hydrolases"/>
    <property type="match status" value="1"/>
</dbReference>
<dbReference type="SUPFAM" id="SSF48295">
    <property type="entry name" value="TrpR-like"/>
    <property type="match status" value="1"/>
</dbReference>
<dbReference type="PROSITE" id="PS01008">
    <property type="entry name" value="DNAA"/>
    <property type="match status" value="1"/>
</dbReference>
<proteinExistence type="evidence at protein level"/>
<reference key="1">
    <citation type="journal article" date="1985" name="Nucleic Acids Res.">
        <title>Structure and function of the region of the replication origin of the Bacillus subtilis chromosome. III. Nucleotide sequence of some 10,000 base pairs in the origin region.</title>
        <authorList>
            <person name="Moriya S."/>
            <person name="Ogasawara N."/>
            <person name="Yoshikawa H."/>
        </authorList>
    </citation>
    <scope>NUCLEOTIDE SEQUENCE [GENOMIC DNA]</scope>
</reference>
<reference key="2">
    <citation type="journal article" date="1994" name="DNA Res.">
        <title>Systematic sequencing of the 180 kilobase region of the Bacillus subtilis chromosome containing the replication origin.</title>
        <authorList>
            <person name="Ogasawara N."/>
            <person name="Nakai S."/>
            <person name="Yoshikawa H."/>
        </authorList>
    </citation>
    <scope>NUCLEOTIDE SEQUENCE [GENOMIC DNA]</scope>
    <source>
        <strain>168</strain>
    </source>
</reference>
<reference key="3">
    <citation type="journal article" date="1997" name="Nature">
        <title>The complete genome sequence of the Gram-positive bacterium Bacillus subtilis.</title>
        <authorList>
            <person name="Kunst F."/>
            <person name="Ogasawara N."/>
            <person name="Moszer I."/>
            <person name="Albertini A.M."/>
            <person name="Alloni G."/>
            <person name="Azevedo V."/>
            <person name="Bertero M.G."/>
            <person name="Bessieres P."/>
            <person name="Bolotin A."/>
            <person name="Borchert S."/>
            <person name="Borriss R."/>
            <person name="Boursier L."/>
            <person name="Brans A."/>
            <person name="Braun M."/>
            <person name="Brignell S.C."/>
            <person name="Bron S."/>
            <person name="Brouillet S."/>
            <person name="Bruschi C.V."/>
            <person name="Caldwell B."/>
            <person name="Capuano V."/>
            <person name="Carter N.M."/>
            <person name="Choi S.-K."/>
            <person name="Codani J.-J."/>
            <person name="Connerton I.F."/>
            <person name="Cummings N.J."/>
            <person name="Daniel R.A."/>
            <person name="Denizot F."/>
            <person name="Devine K.M."/>
            <person name="Duesterhoeft A."/>
            <person name="Ehrlich S.D."/>
            <person name="Emmerson P.T."/>
            <person name="Entian K.-D."/>
            <person name="Errington J."/>
            <person name="Fabret C."/>
            <person name="Ferrari E."/>
            <person name="Foulger D."/>
            <person name="Fritz C."/>
            <person name="Fujita M."/>
            <person name="Fujita Y."/>
            <person name="Fuma S."/>
            <person name="Galizzi A."/>
            <person name="Galleron N."/>
            <person name="Ghim S.-Y."/>
            <person name="Glaser P."/>
            <person name="Goffeau A."/>
            <person name="Golightly E.J."/>
            <person name="Grandi G."/>
            <person name="Guiseppi G."/>
            <person name="Guy B.J."/>
            <person name="Haga K."/>
            <person name="Haiech J."/>
            <person name="Harwood C.R."/>
            <person name="Henaut A."/>
            <person name="Hilbert H."/>
            <person name="Holsappel S."/>
            <person name="Hosono S."/>
            <person name="Hullo M.-F."/>
            <person name="Itaya M."/>
            <person name="Jones L.-M."/>
            <person name="Joris B."/>
            <person name="Karamata D."/>
            <person name="Kasahara Y."/>
            <person name="Klaerr-Blanchard M."/>
            <person name="Klein C."/>
            <person name="Kobayashi Y."/>
            <person name="Koetter P."/>
            <person name="Koningstein G."/>
            <person name="Krogh S."/>
            <person name="Kumano M."/>
            <person name="Kurita K."/>
            <person name="Lapidus A."/>
            <person name="Lardinois S."/>
            <person name="Lauber J."/>
            <person name="Lazarevic V."/>
            <person name="Lee S.-M."/>
            <person name="Levine A."/>
            <person name="Liu H."/>
            <person name="Masuda S."/>
            <person name="Mauel C."/>
            <person name="Medigue C."/>
            <person name="Medina N."/>
            <person name="Mellado R.P."/>
            <person name="Mizuno M."/>
            <person name="Moestl D."/>
            <person name="Nakai S."/>
            <person name="Noback M."/>
            <person name="Noone D."/>
            <person name="O'Reilly M."/>
            <person name="Ogawa K."/>
            <person name="Ogiwara A."/>
            <person name="Oudega B."/>
            <person name="Park S.-H."/>
            <person name="Parro V."/>
            <person name="Pohl T.M."/>
            <person name="Portetelle D."/>
            <person name="Porwollik S."/>
            <person name="Prescott A.M."/>
            <person name="Presecan E."/>
            <person name="Pujic P."/>
            <person name="Purnelle B."/>
            <person name="Rapoport G."/>
            <person name="Rey M."/>
            <person name="Reynolds S."/>
            <person name="Rieger M."/>
            <person name="Rivolta C."/>
            <person name="Rocha E."/>
            <person name="Roche B."/>
            <person name="Rose M."/>
            <person name="Sadaie Y."/>
            <person name="Sato T."/>
            <person name="Scanlan E."/>
            <person name="Schleich S."/>
            <person name="Schroeter R."/>
            <person name="Scoffone F."/>
            <person name="Sekiguchi J."/>
            <person name="Sekowska A."/>
            <person name="Seror S.J."/>
            <person name="Serror P."/>
            <person name="Shin B.-S."/>
            <person name="Soldo B."/>
            <person name="Sorokin A."/>
            <person name="Tacconi E."/>
            <person name="Takagi T."/>
            <person name="Takahashi H."/>
            <person name="Takemaru K."/>
            <person name="Takeuchi M."/>
            <person name="Tamakoshi A."/>
            <person name="Tanaka T."/>
            <person name="Terpstra P."/>
            <person name="Tognoni A."/>
            <person name="Tosato V."/>
            <person name="Uchiyama S."/>
            <person name="Vandenbol M."/>
            <person name="Vannier F."/>
            <person name="Vassarotti A."/>
            <person name="Viari A."/>
            <person name="Wambutt R."/>
            <person name="Wedler E."/>
            <person name="Wedler H."/>
            <person name="Weitzenegger T."/>
            <person name="Winters P."/>
            <person name="Wipat A."/>
            <person name="Yamamoto H."/>
            <person name="Yamane K."/>
            <person name="Yasumoto K."/>
            <person name="Yata K."/>
            <person name="Yoshida K."/>
            <person name="Yoshikawa H.-F."/>
            <person name="Zumstein E."/>
            <person name="Yoshikawa H."/>
            <person name="Danchin A."/>
        </authorList>
    </citation>
    <scope>NUCLEOTIDE SEQUENCE [LARGE SCALE GENOMIC DNA]</scope>
    <source>
        <strain>168</strain>
    </source>
</reference>
<reference key="4">
    <citation type="journal article" date="1988" name="EMBO J.">
        <title>Regulation of initiation of the chromosomal replication by DnaA-boxes in the origin region of the Bacillus subtilis chromosome.</title>
        <authorList>
            <person name="Moriya S."/>
            <person name="Fukuoka T."/>
            <person name="Ogasawara N."/>
            <person name="Yoshikawa H."/>
        </authorList>
    </citation>
    <scope>NUCLEOTIDE SEQUENCE [GENOMIC DNA] OF 1-6 AND 441-446</scope>
    <source>
        <strain>168 / PSL1</strain>
    </source>
</reference>
<reference key="5">
    <citation type="journal article" date="1990" name="EMBO J.">
        <title>Isolation of a dnaA mutant of Bacillus subtilis defective in initiation of replication: amount of DnaA protein determines cells' initiation potential.</title>
        <authorList>
            <person name="Moriya S."/>
            <person name="Kato K."/>
            <person name="Yoshikawa H."/>
            <person name="Ogasawara N."/>
        </authorList>
    </citation>
    <scope>FUNCTION</scope>
    <scope>MUTAGENESIS OF SER-401</scope>
    <source>
        <strain>CRK6000</strain>
    </source>
</reference>
<reference key="6">
    <citation type="journal article" date="1990" name="J. Biochem.">
        <title>Purification and characterization of an initiation protein for chromosomal replication, DnaA, in Bacillus subtilis.</title>
        <authorList>
            <person name="Fukuoka T."/>
            <person name="Moriya S."/>
            <person name="Yoshikawa H."/>
            <person name="Ogasawara N."/>
        </authorList>
    </citation>
    <scope>ATP-BINDING</scope>
    <scope>DNA-BINDING</scope>
</reference>
<reference key="7">
    <citation type="journal article" date="2000" name="Mol. Microbiol.">
        <title>Subcellular localization of Dna-initiation proteins of Bacillus subtilis: evidence that chromosome replication begins at either edge of the nucleoids.</title>
        <authorList>
            <person name="Imai Y."/>
            <person name="Ogasawara N."/>
            <person name="Ishigo-Oka D."/>
            <person name="Kadoya R."/>
            <person name="Daito T."/>
            <person name="Moriya S."/>
        </authorList>
    </citation>
    <scope>SUBCELLULAR LOCATION</scope>
    <source>
        <strain>CRK6000</strain>
    </source>
</reference>
<reference key="8">
    <citation type="journal article" date="2001" name="J. Bacteriol.">
        <title>Autoregulation of the dnaA-dnaN operon and effects of DnaA protein levels on replication initiation in Bacillus subtilis.</title>
        <authorList>
            <person name="Ogura Y."/>
            <person name="Imai Y."/>
            <person name="Ogasawara N."/>
            <person name="Moriya S."/>
        </authorList>
    </citation>
    <scope>AUTOREPRESSION</scope>
    <scope>INDUCTION</scope>
    <source>
        <strain>CRK6000</strain>
    </source>
</reference>
<reference key="9">
    <citation type="journal article" date="2002" name="Proc. Natl. Acad. Sci. U.S.A.">
        <title>An expanded view of bacterial DNA replication.</title>
        <authorList>
            <person name="Noirot-Gros M.-F."/>
            <person name="Dervyn E."/>
            <person name="Wu L.J."/>
            <person name="Mervelet P."/>
            <person name="Errington J."/>
            <person name="Ehrlich S.D."/>
            <person name="Noirot P."/>
        </authorList>
    </citation>
    <scope>INTERACTION WITH YABA</scope>
    <source>
        <strain>168</strain>
    </source>
</reference>
<reference key="10">
    <citation type="journal article" date="2005" name="Proc. Natl. Acad. Sci. U.S.A.">
        <title>A transcriptional response to replication status mediated by the conserved bacterial replication protein DnaA.</title>
        <authorList>
            <person name="Goranov A.I."/>
            <person name="Katz L."/>
            <person name="Breier A.M."/>
            <person name="Burge C.B."/>
            <person name="Grossman A.D."/>
        </authorList>
    </citation>
    <scope>PROBABLE FUNCTION IN TRANSCRIPTION REGULATION</scope>
    <scope>DNA-BINDING</scope>
</reference>
<reference key="11">
    <citation type="journal article" date="2006" name="Proc. Natl. Acad. Sci. U.S.A.">
        <title>Functional dissection of YabA, a negative regulator of DNA replication initiation in Bacillus subtilis.</title>
        <authorList>
            <person name="Noirot-Gros M.F."/>
            <person name="Velten M."/>
            <person name="Yoshimura M."/>
            <person name="McGovern S."/>
            <person name="Morimoto T."/>
            <person name="Ehrlich S.D."/>
            <person name="Ogasawara N."/>
            <person name="Polard P."/>
            <person name="Noirot P."/>
        </authorList>
    </citation>
    <scope>INTERACTION WITH YABA</scope>
</reference>
<reference key="12">
    <citation type="journal article" date="2008" name="Genes Genet. Syst.">
        <title>The functional analysis of YabA, which interacts with DnaA and regulates initiation of chromosome replication in Bacillus subtils.</title>
        <authorList>
            <person name="Cho E."/>
            <person name="Ogasawara N."/>
            <person name="Ishikawa S."/>
        </authorList>
    </citation>
    <scope>INTERACTION WITH DNAD AND YABA</scope>
    <scope>DNA-BINDING</scope>
    <scope>MUTAGENESIS OF LYS-100; PHE-120; ALA-131; TYR-144; ALA-163; THR-271; GLU-279 AND THR-280</scope>
    <source>
        <strain>CRK6000</strain>
    </source>
</reference>
<reference key="13">
    <citation type="journal article" date="2008" name="Cell">
        <title>Dynamic control of the DNA replication initiation protein DnaA by Soj/ParA.</title>
        <authorList>
            <person name="Murray H."/>
            <person name="Errington J."/>
        </authorList>
    </citation>
    <scope>ACTIVITY REGULATION</scope>
    <scope>INTERACTION WITH SOJ</scope>
    <scope>MUTAGENESIS OF HIS-162; GLU-314 AND SER-326</scope>
    <source>
        <strain>168</strain>
    </source>
</reference>
<reference key="14">
    <citation type="journal article" date="2008" name="Dev. Cell">
        <title>Cell-cycle-dependent spatial sequestration of the DnaA replication initiator protein in Bacillus subtilis.</title>
        <authorList>
            <person name="Soufo C.D."/>
            <person name="Soufo H.J."/>
            <person name="Noirot-Gros M.F."/>
            <person name="Steindorf A."/>
            <person name="Noirot P."/>
            <person name="Graumann P.L."/>
        </authorList>
    </citation>
    <scope>FUNCTION</scope>
    <scope>SUBCELLULAR LOCATION</scope>
</reference>
<reference key="15">
    <citation type="journal article" date="2009" name="Mol. Microbiol.">
        <title>YabA of Bacillus subtilis controls DnaA-mediated replication initiation but not the transcriptional response to replication stress.</title>
        <authorList>
            <person name="Goranov A.I."/>
            <person name="Breier A.M."/>
            <person name="Merrikh H."/>
            <person name="Grossman A.D."/>
        </authorList>
    </citation>
    <scope>DISRUPTION PHENOTYPE</scope>
    <source>
        <strain>168 / JH642</strain>
    </source>
</reference>
<reference key="16">
    <citation type="journal article" date="2009" name="Mol. Microbiol.">
        <title>SirA enforces diploidy by inhibiting the replication initiator DnaA during spore formation in Bacillus subtilis.</title>
        <authorList>
            <person name="Wagner J.K."/>
            <person name="Marquis K.A."/>
            <person name="Rudner D.Z."/>
        </authorList>
    </citation>
    <scope>INTERACTION WITH SIRA</scope>
    <source>
        <strain>168 / PY79</strain>
    </source>
</reference>
<reference key="17">
    <citation type="journal article" date="2009" name="J. Biol. Chem.">
        <title>Rapid exchange of bound ADP on the Staphylococcus aureus replication initiation protein DnaA.</title>
        <authorList>
            <person name="Kurokawa K."/>
            <person name="Mizumura H."/>
            <person name="Takaki T."/>
            <person name="Ishii Y."/>
            <person name="Ichihashi N."/>
            <person name="Lee B.L."/>
            <person name="Sekimizu K."/>
        </authorList>
    </citation>
    <scope>ADP- AND ATP-BINDING</scope>
    <source>
        <strain>168</strain>
    </source>
</reference>
<reference key="18">
    <citation type="journal article" date="2010" name="Mol. Microbiol.">
        <title>Ordered association of helicase loader proteins with the Bacillus subtilis origin of replication in vivo.</title>
        <authorList>
            <person name="Smits W.K."/>
            <person name="Goranov A.I."/>
            <person name="Grossman A.D."/>
        </authorList>
    </citation>
    <scope>FUNCTION</scope>
    <scope>DNA REPLISOME ASSEMBLY</scope>
    <scope>SUBCELLULAR LOCATION</scope>
    <scope>DISRUPTION PHENOTYPE</scope>
    <scope>MUTAGENESIS OF SER-401</scope>
</reference>
<reference key="19">
    <citation type="journal article" date="2011" name="J. Bacteriol.">
        <title>The sporulation protein SirA inhibits the binding of DnaA to the origin of replication by contacting a patch of clustered amino acids.</title>
        <authorList>
            <person name="Rahn-Lee L."/>
            <person name="Merrikh H."/>
            <person name="Grossman A.D."/>
            <person name="Losick R."/>
        </authorList>
    </citation>
    <scope>FUNCTION</scope>
    <scope>ACTIVITY REGULATION</scope>
    <scope>INTERACTION WITH SIRA</scope>
    <scope>DOMAIN</scope>
    <scope>MUTAGENESIS OF ASN-47; PHE-49 AND ALA-50</scope>
    <source>
        <strain>168 / PY79</strain>
    </source>
</reference>
<reference key="20">
    <citation type="journal article" date="2011" name="Mol. Microbiol.">
        <title>Control of the replication initiator DnaA by an anti-cooperativity factor.</title>
        <authorList>
            <person name="Merrikh H."/>
            <person name="Grossman A.D."/>
        </authorList>
    </citation>
    <scope>FUNCTION</scope>
    <scope>DNA-BINDING</scope>
</reference>
<reference key="21">
    <citation type="journal article" date="2012" name="EMBO J.">
        <title>Soj/ParA stalls DNA replication by inhibiting helix formation of the initiator protein DnaA.</title>
        <authorList>
            <person name="Scholefield G."/>
            <person name="Errington J."/>
            <person name="Murray H."/>
        </authorList>
    </citation>
    <scope>FUNCTION</scope>
    <scope>CATALYTIC ACTIVITY</scope>
    <scope>ACTIVITY REGULATION</scope>
    <scope>SUBUNIT</scope>
    <scope>INTERACTION WITH SOJ</scope>
    <scope>DOMAIN</scope>
    <scope>MUTAGENESIS OF ALA-132; GLY-154; ILE-190; ARG-264; ARG-281; LEU-294; ARG-313; VAL-323; LEU-337; ALA-341 AND ARG-379</scope>
    <source>
        <strain>168</strain>
    </source>
</reference>
<reference key="22">
    <citation type="journal article" date="2013" name="Mol. Microbiol.">
        <title>YabA and DnaD inhibit helix assembly of the DNA replication initiation protein DnaA.</title>
        <authorList>
            <person name="Scholefield G."/>
            <person name="Murray H."/>
        </authorList>
    </citation>
    <scope>ATPASE ACTIVITY</scope>
    <scope>CATALYTIC ACTIVITY</scope>
    <scope>SUBUNIT</scope>
    <scope>ATP-BINDING</scope>
    <scope>MUTAGENESIS OF HIS-162; ALA-163 AND ARG-313</scope>
    <source>
        <strain>168</strain>
    </source>
</reference>
<reference key="23">
    <citation type="journal article" date="2017" name="PLoS Genet.">
        <title>Rapid turnover of DnaA at replication origin regions contributes to initiation control of DNA replication.</title>
        <authorList>
            <person name="Schenk K."/>
            <person name="Hervas A.B."/>
            <person name="Roesch T.C."/>
            <person name="Eisemann M."/>
            <person name="Schmitt B.A."/>
            <person name="Dahlke S."/>
            <person name="Kleine-Borgmann L."/>
            <person name="Murray S.M."/>
            <person name="Graumann P.L."/>
        </authorList>
    </citation>
    <scope>ACTIVITY REGULATION</scope>
    <scope>SUBCELLULAR LOCATION</scope>
    <scope>INDUCTION</scope>
    <scope>DNA-BINDING</scope>
    <scope>MUTAGENESIS OF GLU-183 AND ARG-387</scope>
</reference>
<reference key="24">
    <citation type="journal article" date="2021" name="Nucleic Acids Res.">
        <title>Evidence for a chromosome origin unwinding system broadly conserved in bacteria.</title>
        <authorList>
            <person name="Pelliciari S."/>
            <person name="Dong M.J."/>
            <person name="Gao F."/>
            <person name="Murray H."/>
        </authorList>
    </citation>
    <scope>FUNCTION</scope>
    <scope>DOMAIN</scope>
    <scope>ATP-BINDING</scope>
    <scope>MUTAGENESIS OF ILE-190 AND ARG-264</scope>
</reference>
<reference key="25">
    <citation type="journal article" date="2022" name="PLoS Genet.">
        <title>Structure and kinase activity of bacterial cell cycle regulator CcrZ.</title>
        <authorList>
            <person name="Wozniak K.J."/>
            <person name="Burby P.E."/>
            <person name="Nandakumar J."/>
            <person name="Simmons L.A."/>
        </authorList>
    </citation>
    <scope>INTERACTION WITH CCRZ</scope>
    <source>
        <strain evidence="29">168 / PY79</strain>
    </source>
</reference>
<reference key="26">
    <citation type="journal article" date="2022" name="Mol. Microbiol.">
        <title>Multiple mechanisms for overcoming lethal over-initiation of DNA replication.</title>
        <authorList>
            <person name="Anderson M.E."/>
            <person name="Smith J.L."/>
            <person name="Grossman A.D."/>
        </authorList>
    </citation>
    <scope>FUNCTION</scope>
    <scope>MUTAGENESIS OF SER-401</scope>
    <source>
        <strain>168 / JH642</strain>
    </source>
</reference>
<reference key="27">
    <citation type="journal article" date="2022" name="Microbiology">
        <title>Prophage-encoded small protein YqaH counteracts the activities of the replication initiator DnaA in Bacillus subtilis.</title>
        <authorList>
            <person name="Ventroux M."/>
            <person name="Noirot-Gros M.F."/>
        </authorList>
    </citation>
    <scope>ACTIVITY REGULATION</scope>
    <scope>INTERACTION WITH YQAH</scope>
    <source>
        <strain>168</strain>
    </source>
</reference>
<reference key="28">
    <citation type="journal article" date="2023" name="Nucleic Acids Res.">
        <title>SirA inhibits the essential DnaA:DnaD interaction to block helicase recruitment during Bacillus subtilis sporulation.</title>
        <authorList>
            <person name="Winterhalter C."/>
            <person name="Stevens D."/>
            <person name="Fenyk S."/>
            <person name="Pelliciari S."/>
            <person name="Marchand E."/>
            <person name="Soultanas P."/>
            <person name="Ilangovan A."/>
            <person name="Murray H."/>
        </authorList>
    </citation>
    <scope>SUBUNIT</scope>
    <scope>INTERACTION WITH DNAD</scope>
    <scope>INTERACTION WITH SIRA</scope>
    <scope>SUBCELLULAR LOCATION</scope>
    <scope>DOMAIN</scope>
    <scope>MUTAGENESIS OF THR-26; TRP-27; ASN-47; PHE-49 AND ALA-50</scope>
</reference>
<reference evidence="34" key="29">
    <citation type="journal article" date="2014" name="Mol. Microbiol.">
        <title>Structure and interactions of the Bacillus subtilis sporulation inhibitor of DNA replication, SirA, with domain I of DnaA.</title>
        <authorList>
            <person name="Jameson K.H."/>
            <person name="Rostami N."/>
            <person name="Fogg M.J."/>
            <person name="Turkenburg J.P."/>
            <person name="Grahl A."/>
            <person name="Murray H."/>
            <person name="Wilkinson A.J."/>
        </authorList>
    </citation>
    <scope>X-RAY CRYSTALLOGRAPHY (1.65 ANGSTROMS) OF 1-82 IN COMPLEX WITH SIRA</scope>
    <scope>SUBUNIT</scope>
    <scope>DOMAIN</scope>
    <scope>MUTAGENESIS OF TRP-27 AND PHE-49</scope>
</reference>
<reference evidence="35 36" key="30">
    <citation type="journal article" date="2023" name="Nat. Commun.">
        <title>The bacterial replication origin BUS promotes nucleobase capture.</title>
        <authorList>
            <person name="Pelliciari S."/>
            <person name="Bodet-Lefevre S."/>
            <person name="Fenyk S."/>
            <person name="Stevens D."/>
            <person name="Winterhalter C."/>
            <person name="Schramm F.D."/>
            <person name="Pintar S."/>
            <person name="Burnham D.R."/>
            <person name="Merces G."/>
            <person name="Richardson T.T."/>
            <person name="Tashiro Y."/>
            <person name="Hubbard J."/>
            <person name="Yardimci H."/>
            <person name="Ilangovan A."/>
            <person name="Murray H."/>
        </authorList>
    </citation>
    <scope>X-RAY CRYSTALLOGRAPHY (2.38 ANGSTROMS) OF 100-344 IN COMPLEX WITH ATP ANALOG AND MG(2+)</scope>
    <scope>STRUCTURE BY ELECTRON MICROSCOPY (3.20 ANGSTROMS) OF 109-446 IN COMPLEX WITH ATP; MG(2+); DSDNA AND SSDNA</scope>
    <scope>FUNCTION</scope>
    <scope>DOMAIN</scope>
    <scope>ALANINE-SCANNING MUTATGENESIS OF DOMAINS III AND IV</scope>
    <scope>MUTAGENESIS OF ASN-187; ILE-190; ILE-193; ARG-202; GLU-228 AND ARG-264</scope>
    <scope>DNA-BINDING</scope>
    <source>
        <strain>168</strain>
    </source>
</reference>
<protein>
    <recommendedName>
        <fullName evidence="2">Chromosomal replication initiator protein DnaA</fullName>
        <ecNumber evidence="18 19">3.6.4.-</ecNumber>
    </recommendedName>
</protein>
<accession>P05648</accession>
<keyword id="KW-0002">3D-structure</keyword>
<keyword id="KW-0067">ATP-binding</keyword>
<keyword id="KW-0963">Cytoplasm</keyword>
<keyword id="KW-0235">DNA replication</keyword>
<keyword id="KW-0238">DNA-binding</keyword>
<keyword id="KW-0378">Hydrolase</keyword>
<keyword id="KW-0446">Lipid-binding</keyword>
<keyword id="KW-0547">Nucleotide-binding</keyword>
<keyword id="KW-1185">Reference proteome</keyword>
<keyword id="KW-0678">Repressor</keyword>
<keyword id="KW-0804">Transcription</keyword>
<keyword id="KW-0805">Transcription regulation</keyword>
<sequence length="446" mass="50859">MENILDLWNQALAQIEKKLSKPSFETWMKSTKAHSLQGDTLTITAPNEFARDWLESRYLHLIADTIYELTGEELSIKFVIPQNQDVEDFMPKPQVKKAVKEDTSDFPQNMLNPKYTFDTFVIGSGNRFAHAASLAVAEAPAKAYNPLFIYGGVGLGKTHLMHAIGHYVIDHNPSAKVVYLSSEKFTNEFINSIRDNKAVDFRNRYRNVDVLLIDDIQFLAGKEQTQEEFFHTFNTLHEESKQIVISSDRPPKEIPTLEDRLRSRFEWGLITDITPPDLETRIAILRKKAKAEGLDIPNEVMLYIANQIDSNIRELEGALIRVVAYSSLINKDINADLAAEALKDIIPSSKPKVITIKEIQRVVGQQFNIKLEDFKAKKRTKSVAFPRQIAMYLSREMTDSSLPKIGEEFGGRDHTTVIHAHEKISKLLADDEQLQQHVKEIKEQLK</sequence>
<comment type="function">
    <text evidence="1 4 7 9 14 15 16 17 21 22 24 27">Plays an essential role in the initiation and regulation of chromosomal replication (PubMed:2167836). ATP-DnaA binds to the origin of replication (oriC) to initiate formation of the DNA replication initiation complex once per cell cycle. Binds directly to oriC at a 9 bp consensus (DnaA box): 5'-TTATCCACA-3' and separates the double-stranded (ds)DNA (PubMed:2168872, PubMed:21895792, PubMed:28166228, PubMed:34197592, PubMed:38097584). Forms a right-handed helical filament on oriC DNA; dsDNA binds to the exterior of the filament while single-stranded (ss)DNA is stabilized in the filament's interior (PubMed:38097584). The ATP-DnaA-oriC complex binds and stabilizes one strand of the AT-rich DNA unwinding element (DUE or basal unwinding system, BUS), permitting loading of DNA polymerase (PubMed:38097584). Binds ATP with high affinity, ADP with lower affinity, but not AMP, cAMP or cGMP; ATP stimulates binding to DnaA boxes (PubMed:2168872, PubMed:21895792, PubMed:28166228). Once bound promotes sequence-specific strand separation of DnaA-trios (3'-GAT-5' consensus) adjacent to oriC in the presence of ATP but not ADP (PubMed:34197592, PubMed:38097584). Domains III and IV are sufficient to separate dsDNA strands (PubMed:38097584). The 'initiator specific motif' (ISM) of domain III contacts the middle adenine residue of the DnaA-trio probably stretching and stabilizing ssDNA (PubMed:38097584). DnaA-trio recognition is co-operative and depends on DnaA self-assembly (PubMed:38097584). The ssDNA serves as an assembly region for the replication machinery. Tethered to DnaN (beta sliding clamp subunit of DNA polymerase) and thus replication forks by YabA (PubMed:19081080). During replication initiation DnaA-ATP binds cooperatively to sequences in oriC (PubMed:21895792, PubMed:22286949). YabA prevents this cooperative binding while still allowing DnaA to bind DNA (PubMed:21895792). During the cell cycle an initial phase occurs in which DnaA is associated with origin regions, then the origin regions become spatially separate from the centrally sequestered DnaA molecules, and most DnaA molecules are unable to reassociate with origin regions (PubMed:19081080). Does not require YabA to bind DNA (PubMed:18506095). During sporulation SirA prevents DnaA association with the replication origin to prevent excessive chromosome replication (PubMed:21239581). Overexpression induces the SOS response; increasing expression of downstream dnaN blocks this induction (PubMed:11395445). Over-initiation of DNA replication is very deleterious; isolated suppressors in relA, ndrR, dnaC, cshA and crrZ increase replication elongation, decrease replication inititation or lead to a decrease in the replicative DNA helicase (PubMed:36053906). Binds acidic phospholipids (By similarity).</text>
</comment>
<comment type="function">
    <text evidence="12">The half-life of ADP-DnaA is 1.5 minutes, of ATP-DnaA is 5 minutes at 37 degrees Celsius; in E.coli the half-life of ADP-DnaA is about 45 minutes (PubMed:19841480).</text>
</comment>
<comment type="function">
    <text evidence="4 30">Also acts as a transcriptional regulator. DnaA inhibits its own gene expression (PubMed:11395445). DnaA binds specifically to the promoter regions of at least 20 operons (56 genes), including itself, sda and dnaB, and probably controls their expression in response to DNA replication inhibition (PubMed:16120674).</text>
</comment>
<comment type="catalytic activity">
    <reaction evidence="18 19">
        <text>ATP + H2O = ADP + phosphate + H(+)</text>
        <dbReference type="Rhea" id="RHEA:13065"/>
        <dbReference type="ChEBI" id="CHEBI:15377"/>
        <dbReference type="ChEBI" id="CHEBI:15378"/>
        <dbReference type="ChEBI" id="CHEBI:30616"/>
        <dbReference type="ChEBI" id="CHEBI:43474"/>
        <dbReference type="ChEBI" id="CHEBI:456216"/>
    </reaction>
</comment>
<comment type="activity regulation">
    <text evidence="8 14 17 21 26">Oligomerization of DnaA can be controlled by Soj; monomeric ADP-Soj inhibits formation of the DnaA helix (PubMed:18854156, PubMed:22286949). YabA prevents the cooperative binding of DnaA-ATP to oriC-containing sequences; increased levels of DnaN (beta sliding clamp subunit of DNA polymerase) removes YabA from association with DnaA on the chromosome, enabling increased association of DnaA with its chromosomal binding sites (PubMed:21895792). Both Soj and YabA chase DnaA from oriC site, YabA tethers DnaA to the DNA replication fork via the beta sliding clamp subunit DnaN (PubMed:28166228). SirA antagonizes the ability of DnaA to bind to the replication origin, and thus decreases replication inititation during sporulation (PubMed:21239581). Small protein YqaH, part of the skin prophage-like element, binds to DnaA and antagonizes its replication initiation and transcriptional regulation activities (PubMed:36748575).</text>
</comment>
<comment type="subunit">
    <text evidence="2 5 6 7 8 10 13 18 19 20 23 25 26">The DNA replisome assembles sequentially on oriC in this order; DnaA, DnaD, DnaB, DnaI-DnaC helicase (PubMed:19968790). Oligomerizes as a right-handed, spiral filament on DNA at oriC (PubMed:38097584). Forms an ATP-dependent helix on DNA at oriC; both DnaD and YabA inhibit formation of the DnaA helix (PubMed:23909787). Forms an ATP-dependent oligomer, formation is stimulated by ds- and ssDNA; monomeric ADP-Soj inhibits oligomer formation (PubMed:22286949). Interacts with DnaD (PubMed:36416272). Interacts with YabA (PubMed:12060778, PubMed:16461910, PubMed:23909787), and via YabA, with the replication machinery subunit beta sliding clamp DnaN (PubMed:12060778, PubMed:16461910). Interacts with YabA via domain IIIa (residues 109-275) (PubMed:18506095). Isolated domain I forms a 1:1 complex with SirA (PubMed:19682252, PubMed:21239581, PubMed:25041308). Interacts with Soj, probably via domain III (PubMed:18854156, PubMed:22286949). Interacts via domains I and III with CcrZ (PubMed:35576203). Interacts via domain IV with skin prophage-like element protein YqaH (PubMed:36748575).</text>
</comment>
<comment type="interaction">
    <interactant intactId="EBI-2014722">
        <id>P05648</id>
    </interactant>
    <interactant intactId="EBI-2014722">
        <id>P05648</id>
        <label>dnaA</label>
    </interactant>
    <organismsDiffer>false</organismsDiffer>
    <experiments>2</experiments>
</comment>
<comment type="interaction">
    <interactant intactId="EBI-2014722">
        <id>P05648</id>
    </interactant>
    <interactant intactId="EBI-2014674">
        <id>P37522</id>
        <label>soj</label>
    </interactant>
    <organismsDiffer>false</organismsDiffer>
    <experiments>2</experiments>
</comment>
<comment type="interaction">
    <interactant intactId="EBI-2014722">
        <id>P05648</id>
    </interactant>
    <interactant intactId="EBI-5243764">
        <id>P37542</id>
        <label>yabA</label>
    </interactant>
    <organismsDiffer>false</organismsDiffer>
    <experiments>4</experiments>
</comment>
<comment type="subcellular location">
    <subcellularLocation>
        <location evidence="2 3">Cytoplasm</location>
    </subcellularLocation>
    <subcellularLocation>
        <location evidence="9">Cytoplasm</location>
        <location evidence="9">Nucleoid</location>
    </subcellularLocation>
    <text evidence="3 9 10 13 21 25">Forms 1 or rarely 2 (in large cells) tight foci on the nucleoid which usually coincide with replicative DNA polymerase (PubMed:19081080, PubMed:28166228). Induction of SirA disrupts localization of DnaA (PubMed:19682252). Some accumulation is seen at oriC after replication initiation (PubMed:19968790, PubMed:28166228, PubMed:36416272). The protein is bound to oriC and replication forks with a half-life of about 2.5 seconds, independent of transcription (PubMed:28166228). In the absence of yabA (or soj) more protein binds to oriC, leading to greater replication initiation (PubMed:28166228).</text>
</comment>
<comment type="induction">
    <text evidence="4 21">Part of the dnaA-dnaN operon, represses transcription of its own operon (PubMed:11395445, PubMed:28166228).</text>
</comment>
<comment type="domain">
    <text evidence="2 14 18 20 25 27">Domain I is involved in oligomerization and binding regulators, domain II is flexibile and of varying length in different bacteria, domain III forms the AAA+ region, while domain IV binds dsDNA (By similarity). Domain I interacts with both DnaD (PubMed:36416272) and SirA (PubMed:21239581, PubMed:25041308). Protein missing domains I and II interacts with Soj and oligomerizes on DNA (PubMed:22286949). Protein with residues 104-446 (missing domains I and II) is able to promote strand separation in vitro (PubMed:38097584, PubMed:36416272). In structures with a 5'-ssDNA tailed DNA scaffold (2 DnaA boxes and a DnaA-trio), domains III and IV of 7 DnaA proteins form 2 separate spiral lattices: domain III interacts with the ssDNA and domain IV forms a parallel spiral lattice. In the oligomer domain IV of DnaA-1, DnaA-2 and DnaA-3 interacts with the 2 DnaA boxes in the scaffold. Domains III and IV are linked by a short linker which allows them separate movement (PubMed:38097584). The 'initiator specific motif' forms a wedge-shaped helix that binds via a few residues (Asn-187, Ile-190, Ile-193, Arg-202, and Glu-228) to DnaA-trio consensus sites in the DNA just downstream of the oriC sites (PubMed:38097584).</text>
</comment>
<comment type="disruption phenotype">
    <text evidence="11 13">No change in YabA foci (in a strain that does not depend on dnaA for replication) (PubMed:19737352).</text>
</comment>
<comment type="similarity">
    <text evidence="2">Belongs to the DnaA family.</text>
</comment>
<feature type="chain" id="PRO_0000114133" description="Chromosomal replication initiator protein DnaA">
    <location>
        <begin position="1"/>
        <end position="446"/>
    </location>
</feature>
<feature type="region of interest" description="Domain I, interacts with DnaA modulators" evidence="31">
    <location>
        <begin position="1"/>
        <end position="82"/>
    </location>
</feature>
<feature type="region of interest" description="Domain II" evidence="33">
    <location>
        <begin position="83"/>
        <end position="103"/>
    </location>
</feature>
<feature type="region of interest" description="Domain III, AAA+ region" evidence="33">
    <location>
        <begin position="104"/>
        <end position="332"/>
    </location>
</feature>
<feature type="region of interest" description="linker" evidence="33">
    <location>
        <begin position="333"/>
        <end position="346"/>
    </location>
</feature>
<feature type="region of interest" description="Domain IV, binds dsDNA" evidence="33">
    <location>
        <begin position="347"/>
        <end position="446"/>
    </location>
</feature>
<feature type="short sequence motif" description="Initiator specific motif (ISM)" evidence="27 32">
    <location>
        <begin position="182"/>
        <end position="206"/>
    </location>
</feature>
<feature type="binding site" evidence="2 35 36">
    <location>
        <position position="154"/>
    </location>
    <ligand>
        <name>ATP</name>
        <dbReference type="ChEBI" id="CHEBI:30616"/>
    </ligand>
</feature>
<feature type="binding site" evidence="35 36">
    <location>
        <position position="155"/>
    </location>
    <ligand>
        <name>ATP</name>
        <dbReference type="ChEBI" id="CHEBI:30616"/>
    </ligand>
</feature>
<feature type="binding site" evidence="2 35 36">
    <location>
        <position position="156"/>
    </location>
    <ligand>
        <name>ATP</name>
        <dbReference type="ChEBI" id="CHEBI:30616"/>
    </ligand>
</feature>
<feature type="binding site" evidence="2">
    <location>
        <position position="157"/>
    </location>
    <ligand>
        <name>ATP</name>
        <dbReference type="ChEBI" id="CHEBI:30616"/>
    </ligand>
</feature>
<feature type="binding site" evidence="2 35 36">
    <location>
        <position position="158"/>
    </location>
    <ligand>
        <name>ATP</name>
        <dbReference type="ChEBI" id="CHEBI:30616"/>
    </ligand>
</feature>
<feature type="binding site" evidence="36">
    <location>
        <position position="158"/>
    </location>
    <ligand>
        <name>Mg(2+)</name>
        <dbReference type="ChEBI" id="CHEBI:18420"/>
    </ligand>
</feature>
<feature type="binding site" evidence="36">
    <location>
        <position position="214"/>
    </location>
    <ligand>
        <name>Mg(2+)</name>
        <dbReference type="ChEBI" id="CHEBI:18420"/>
    </ligand>
</feature>
<feature type="binding site" evidence="36">
    <location>
        <position position="215"/>
    </location>
    <ligand>
        <name>Mg(2+)</name>
        <dbReference type="ChEBI" id="CHEBI:18420"/>
    </ligand>
</feature>
<feature type="mutagenesis site" description="Lethal in vivo, loss of interaction with DnaD, protein enriched at oriC, does not recruit DnaD to oriC." evidence="25">
    <original>T</original>
    <variation>A</variation>
    <location>
        <position position="26"/>
    </location>
</feature>
<feature type="mutagenesis site" description="Domain I no longer interacts with SirA (in E.coli). Lethal in vivo, loss of interaction with DnaD, protein enriched at oriC, does not recruit DnaD to oriC." evidence="20 25">
    <original>W</original>
    <variation>A</variation>
    <location>
        <position position="27"/>
    </location>
</feature>
<feature type="mutagenesis site" description="No longer sensitive to SirA overexpression, no longer interacts with SirA." evidence="14">
    <original>N</original>
    <variation>D</variation>
    <location>
        <position position="47"/>
    </location>
</feature>
<feature type="mutagenesis site" description="Partially restores DnaD recruitment to oriC (due to partial loss of binding to SirA), increases presence of DnaA and DnaD at oriC during first 3 hours of sporulation." evidence="25">
    <original>N</original>
    <variation>S</variation>
    <location>
        <position position="47"/>
    </location>
</feature>
<feature type="mutagenesis site" description="Domain I no longer interacts with SirA (in E.coli). Lethal in vivo, loss of interaction with DnaD, protein enriched at oriC, does not recruit DnaD to oriC." evidence="20 25">
    <original>F</original>
    <variation>A</variation>
    <location>
        <position position="49"/>
    </location>
</feature>
<feature type="mutagenesis site" description="No longer sensitive to SirA overexpression, no longer interacts with SirA." evidence="14">
    <original>F</original>
    <variation>Y</variation>
    <location>
        <position position="49"/>
    </location>
</feature>
<feature type="mutagenesis site" description="No longer sensitive to SirA overexpression, no longer interacts with SirA, DnaA interacts normally with replication origin." evidence="14">
    <original>A</original>
    <variation>T</variation>
    <location>
        <position position="50"/>
    </location>
</feature>
<feature type="mutagenesis site" description="No longer sensitive to SirA overexpression, no longer interacts with SirA, DnaA interacts normally with replication origin. Restores DnaD recruitment to oriC (due to loss of binding to SirA)." evidence="14 25">
    <original>A</original>
    <variation>V</variation>
    <location>
        <position position="50"/>
    </location>
</feature>
<feature type="mutagenesis site" description="No longer interacts with itself, DnaD or YabA." evidence="7">
    <original>K</original>
    <variation>E</variation>
    <location>
        <position position="100"/>
    </location>
</feature>
<feature type="mutagenesis site" description="No longer interacts with YabA, decreased interaction with DnaD, still self associates in vitro, cannot be introduced in vivo." evidence="7">
    <original>F</original>
    <variation>S</variation>
    <location>
        <position position="120"/>
    </location>
</feature>
<feature type="mutagenesis site" description="No longer interacts with DnaD or YabA, still self associates." evidence="7">
    <original>A</original>
    <variation>V</variation>
    <location>
        <position position="131"/>
    </location>
</feature>
<feature type="mutagenesis site" description="Over initiates DNA replication, increased propensity to form oligomers in vivo." evidence="18">
    <original>A</original>
    <variation>T</variation>
    <location>
        <position position="132"/>
    </location>
</feature>
<feature type="mutagenesis site" description="No longer interacts with YabA, decreased interaction with DnaD, still self associates in vitro, over- and asynchronous initiation of genome replication and loss of YabA foci in vivo." evidence="7">
    <original>Y</original>
    <variation>C</variation>
    <location>
        <position position="144"/>
    </location>
</feature>
<feature type="mutagenesis site" description="Over initiates DNA replication, increased propensity to form oligomers in vivo." evidence="18">
    <original>G</original>
    <variation>S</variation>
    <location>
        <position position="154"/>
    </location>
</feature>
<feature type="mutagenesis site" description="Suppresses overexpression of YabA, partially able to form DnaA helices in the presence of YabA in vitro, decreased interaction with YabA in vitro. Over-initiates DNA replication, suppresses inhibition of DNA replication initiation caused by Soj 'V-12' overexpression." evidence="8 19">
    <original>H</original>
    <variation>Y</variation>
    <location>
        <position position="162"/>
    </location>
</feature>
<feature type="mutagenesis site" description="No longer interacts with itself, DnaD or YabA." evidence="7">
    <original>A</original>
    <variation>P</variation>
    <location>
        <position position="163"/>
    </location>
</feature>
<feature type="mutagenesis site" description="Suppresses overexpression of YabA, unable to form oligomers in vitro." evidence="19">
    <original>A</original>
    <variation>V</variation>
    <location>
        <position position="163"/>
    </location>
</feature>
<feature type="mutagenesis site" description="Strongly decreased ATPase, binds oriC but binding not stimulated by ATP in vitro, in vivo dominant negative to wild-type, decreased inititation of replication." evidence="21">
    <original>E</original>
    <variation>Q</variation>
    <location>
        <position position="183"/>
    </location>
</feature>
<feature type="mutagenesis site" description="Strong growth defect." evidence="27">
    <original>N</original>
    <variation>A</variation>
    <location>
        <position position="187"/>
    </location>
</feature>
<feature type="mutagenesis site" description="Oligomerization not stimulated by ssDNA. Strong growth defect, no strand separation in vitro, wild-type ATP binding." evidence="18 22 27">
    <original>I</original>
    <variation>A</variation>
    <location>
        <position position="190"/>
    </location>
</feature>
<feature type="mutagenesis site" description="Strong growth defect." evidence="27">
    <original>I</original>
    <variation>A</variation>
    <location>
        <position position="193"/>
    </location>
</feature>
<feature type="mutagenesis site" description="Strong growth defect." evidence="27">
    <original>R</original>
    <variation>A</variation>
    <location>
        <position position="202"/>
    </location>
</feature>
<feature type="mutagenesis site" description="Strong growth defect." evidence="27">
    <original>E</original>
    <variation>A</variation>
    <location>
        <position position="228"/>
    </location>
</feature>
<feature type="mutagenesis site" description="Greatly decreased self oligomerization in vivo and in vitro. No strand separation, wild-type ATP binding." evidence="18 22 27">
    <original>R</original>
    <variation>A</variation>
    <location>
        <position position="264"/>
    </location>
</feature>
<feature type="mutagenesis site" description="No longer interacts with DnaD or YabA, still self associates." evidence="7">
    <original>T</original>
    <variation>A</variation>
    <location>
        <position position="271"/>
    </location>
</feature>
<feature type="mutagenesis site" description="No longer interacts with itself, DnaD or YabA." evidence="7">
    <original>E</original>
    <variation>G</variation>
    <location>
        <position position="279"/>
    </location>
</feature>
<feature type="mutagenesis site" description="No longer interacts with itself, DnaD or YabA." evidence="7">
    <original>T</original>
    <variation>A</variation>
    <location>
        <position position="280"/>
    </location>
</feature>
<feature type="mutagenesis site" description="Over initiates DNA replication, increased propensity to form oligomers in vivo." evidence="18">
    <original>R</original>
    <variation>G</variation>
    <location>
        <position position="281"/>
    </location>
</feature>
<feature type="mutagenesis site" description="Increased DNA replication initiation, does not interact with Soj, oligomerizes, suppresses inhibition of DNA replication initiation caused by Soj 'V-12' overexpression." evidence="18">
    <original>L</original>
    <variation>R</variation>
    <location>
        <position position="294"/>
    </location>
</feature>
<feature type="mutagenesis site" description="Binds but does not hydrolyze ATP, still oligomerizes." evidence="18 19">
    <original>R</original>
    <variation>A</variation>
    <location>
        <position position="313"/>
    </location>
</feature>
<feature type="mutagenesis site" description="Over-initiates DNA replication, suppresses inhibition of DNA replication initiation caused by Soj 'V-12' overexpression." evidence="8">
    <original>E</original>
    <variation>K</variation>
    <location>
        <position position="314"/>
    </location>
</feature>
<feature type="mutagenesis site" description="Wild-type DNA replication initiation, does not interact with Soj, oligomerizes, suppresses inhibition of DNA replication initiation caused by Soj 'V-12' overexpression." evidence="18">
    <original>V</original>
    <variation>D</variation>
    <location>
        <position position="323"/>
    </location>
</feature>
<feature type="mutagenesis site" description="Over-initiates DNA replication, suppresses inhibition of DNA replication initiation caused by Soj 'V-12' overexpression." evidence="8">
    <original>S</original>
    <variation>L</variation>
    <location>
        <position position="326"/>
    </location>
</feature>
<feature type="mutagenesis site" description="Wild-type DNA replication initiation, does not interact with Soj, suppresses inhibition of DNA replication initiation caused by Soj 'V-12' overexpression." evidence="18">
    <original>L</original>
    <variation>P</variation>
    <location>
        <position position="337"/>
    </location>
</feature>
<feature type="mutagenesis site" description="Wild-type DNA replication initiation, does not interact with Soj, oligomerizes,suppresses inhibition of DNA replication initiation caused by Soj 'V-12' overexpression." evidence="18">
    <original>A</original>
    <variation>V</variation>
    <location>
        <position position="341"/>
    </location>
</feature>
<feature type="mutagenesis site" description="Oligomerization not stimulated by dsDNA." evidence="18">
    <original>R</original>
    <variation>A</variation>
    <location>
        <position position="379"/>
    </location>
</feature>
<feature type="mutagenesis site" description="Does not bind oriC DNA, forms foci at replication forks but not oriC regions." evidence="21">
    <original>R</original>
    <variation>C</variation>
    <location>
        <position position="387"/>
    </location>
</feature>
<feature type="mutagenesis site" description="In dnaA1; temperature sensitive growth at 49 degrees Celsius, DNA replication inititiation is blocked. DnaB, DnaC, DnaD and SsbA no longer associate with oriC at 52 degrees Celsius. 30% increase in DNA replication initiation at 30 degrees Celsius." evidence="15 24">
    <original>S</original>
    <variation>F</variation>
    <location>
        <position position="401"/>
    </location>
</feature>
<feature type="helix" evidence="37">
    <location>
        <begin position="1"/>
        <end position="16"/>
    </location>
</feature>
<feature type="helix" evidence="37">
    <location>
        <begin position="21"/>
        <end position="27"/>
    </location>
</feature>
<feature type="turn" evidence="37">
    <location>
        <begin position="28"/>
        <end position="30"/>
    </location>
</feature>
<feature type="strand" evidence="37">
    <location>
        <begin position="32"/>
        <end position="37"/>
    </location>
</feature>
<feature type="strand" evidence="37">
    <location>
        <begin position="40"/>
        <end position="44"/>
    </location>
</feature>
<feature type="helix" evidence="37">
    <location>
        <begin position="48"/>
        <end position="57"/>
    </location>
</feature>
<feature type="helix" evidence="37">
    <location>
        <begin position="59"/>
        <end position="70"/>
    </location>
</feature>
<feature type="strand" evidence="37">
    <location>
        <begin position="75"/>
        <end position="79"/>
    </location>
</feature>
<feature type="helix" evidence="38">
    <location>
        <begin position="124"/>
        <end position="126"/>
    </location>
</feature>
<feature type="helix" evidence="38">
    <location>
        <begin position="127"/>
        <end position="138"/>
    </location>
</feature>
<feature type="turn" evidence="38">
    <location>
        <begin position="140"/>
        <end position="142"/>
    </location>
</feature>
<feature type="strand" evidence="38">
    <location>
        <begin position="145"/>
        <end position="152"/>
    </location>
</feature>
<feature type="helix" evidence="38">
    <location>
        <begin position="157"/>
        <end position="169"/>
    </location>
</feature>
<feature type="strand" evidence="38">
    <location>
        <begin position="177"/>
        <end position="181"/>
    </location>
</feature>
<feature type="helix" evidence="38">
    <location>
        <begin position="182"/>
        <end position="194"/>
    </location>
</feature>
<feature type="helix" evidence="38">
    <location>
        <begin position="198"/>
        <end position="205"/>
    </location>
</feature>
<feature type="strand" evidence="38">
    <location>
        <begin position="209"/>
        <end position="214"/>
    </location>
</feature>
<feature type="helix" evidence="38">
    <location>
        <begin position="216"/>
        <end position="219"/>
    </location>
</feature>
<feature type="helix" evidence="38">
    <location>
        <begin position="223"/>
        <end position="238"/>
    </location>
</feature>
<feature type="strand" evidence="38">
    <location>
        <begin position="242"/>
        <end position="246"/>
    </location>
</feature>
<feature type="helix" evidence="38">
    <location>
        <begin position="251"/>
        <end position="253"/>
    </location>
</feature>
<feature type="helix" evidence="38">
    <location>
        <begin position="259"/>
        <end position="265"/>
    </location>
</feature>
<feature type="strand" evidence="38">
    <location>
        <begin position="267"/>
        <end position="273"/>
    </location>
</feature>
<feature type="helix" evidence="38">
    <location>
        <begin position="278"/>
        <end position="291"/>
    </location>
</feature>
<feature type="helix" evidence="38">
    <location>
        <begin position="298"/>
        <end position="307"/>
    </location>
</feature>
<feature type="helix" evidence="38">
    <location>
        <begin position="312"/>
        <end position="328"/>
    </location>
</feature>
<feature type="helix" evidence="38">
    <location>
        <begin position="335"/>
        <end position="342"/>
    </location>
</feature>
<name>DNAA_BACSU</name>
<organism>
    <name type="scientific">Bacillus subtilis (strain 168)</name>
    <dbReference type="NCBI Taxonomy" id="224308"/>
    <lineage>
        <taxon>Bacteria</taxon>
        <taxon>Bacillati</taxon>
        <taxon>Bacillota</taxon>
        <taxon>Bacilli</taxon>
        <taxon>Bacillales</taxon>
        <taxon>Bacillaceae</taxon>
        <taxon>Bacillus</taxon>
    </lineage>
</organism>
<evidence type="ECO:0000250" key="1">
    <source>
        <dbReference type="UniProtKB" id="P03004"/>
    </source>
</evidence>
<evidence type="ECO:0000255" key="2">
    <source>
        <dbReference type="HAMAP-Rule" id="MF_00377"/>
    </source>
</evidence>
<evidence type="ECO:0000269" key="3">
    <source>
    </source>
</evidence>
<evidence type="ECO:0000269" key="4">
    <source>
    </source>
</evidence>
<evidence type="ECO:0000269" key="5">
    <source>
    </source>
</evidence>
<evidence type="ECO:0000269" key="6">
    <source>
    </source>
</evidence>
<evidence type="ECO:0000269" key="7">
    <source>
    </source>
</evidence>
<evidence type="ECO:0000269" key="8">
    <source>
    </source>
</evidence>
<evidence type="ECO:0000269" key="9">
    <source>
    </source>
</evidence>
<evidence type="ECO:0000269" key="10">
    <source>
    </source>
</evidence>
<evidence type="ECO:0000269" key="11">
    <source>
    </source>
</evidence>
<evidence type="ECO:0000269" key="12">
    <source>
    </source>
</evidence>
<evidence type="ECO:0000269" key="13">
    <source>
    </source>
</evidence>
<evidence type="ECO:0000269" key="14">
    <source>
    </source>
</evidence>
<evidence type="ECO:0000269" key="15">
    <source>
    </source>
</evidence>
<evidence type="ECO:0000269" key="16">
    <source>
    </source>
</evidence>
<evidence type="ECO:0000269" key="17">
    <source>
    </source>
</evidence>
<evidence type="ECO:0000269" key="18">
    <source>
    </source>
</evidence>
<evidence type="ECO:0000269" key="19">
    <source>
    </source>
</evidence>
<evidence type="ECO:0000269" key="20">
    <source>
    </source>
</evidence>
<evidence type="ECO:0000269" key="21">
    <source>
    </source>
</evidence>
<evidence type="ECO:0000269" key="22">
    <source>
    </source>
</evidence>
<evidence type="ECO:0000269" key="23">
    <source>
    </source>
</evidence>
<evidence type="ECO:0000269" key="24">
    <source>
    </source>
</evidence>
<evidence type="ECO:0000269" key="25">
    <source>
    </source>
</evidence>
<evidence type="ECO:0000269" key="26">
    <source>
    </source>
</evidence>
<evidence type="ECO:0000269" key="27">
    <source>
    </source>
</evidence>
<evidence type="ECO:0000303" key="28">
    <source>
    </source>
</evidence>
<evidence type="ECO:0000303" key="29">
    <source>
    </source>
</evidence>
<evidence type="ECO:0000305" key="30">
    <source>
    </source>
</evidence>
<evidence type="ECO:0000305" key="31">
    <source>
    </source>
</evidence>
<evidence type="ECO:0000305" key="32">
    <source>
    </source>
</evidence>
<evidence type="ECO:0000305" key="33">
    <source>
    </source>
</evidence>
<evidence type="ECO:0007744" key="34">
    <source>
        <dbReference type="PDB" id="4TPS"/>
    </source>
</evidence>
<evidence type="ECO:0007744" key="35">
    <source>
        <dbReference type="PDB" id="8BTG"/>
    </source>
</evidence>
<evidence type="ECO:0007744" key="36">
    <source>
        <dbReference type="PDB" id="8BV3"/>
    </source>
</evidence>
<evidence type="ECO:0007829" key="37">
    <source>
        <dbReference type="PDB" id="4TPS"/>
    </source>
</evidence>
<evidence type="ECO:0007829" key="38">
    <source>
        <dbReference type="PDB" id="8BV3"/>
    </source>
</evidence>